<name>WRK57_ARATH</name>
<organism>
    <name type="scientific">Arabidopsis thaliana</name>
    <name type="common">Mouse-ear cress</name>
    <dbReference type="NCBI Taxonomy" id="3702"/>
    <lineage>
        <taxon>Eukaryota</taxon>
        <taxon>Viridiplantae</taxon>
        <taxon>Streptophyta</taxon>
        <taxon>Embryophyta</taxon>
        <taxon>Tracheophyta</taxon>
        <taxon>Spermatophyta</taxon>
        <taxon>Magnoliopsida</taxon>
        <taxon>eudicotyledons</taxon>
        <taxon>Gunneridae</taxon>
        <taxon>Pentapetalae</taxon>
        <taxon>rosids</taxon>
        <taxon>malvids</taxon>
        <taxon>Brassicales</taxon>
        <taxon>Brassicaceae</taxon>
        <taxon>Camelineae</taxon>
        <taxon>Arabidopsis</taxon>
    </lineage>
</organism>
<reference key="1">
    <citation type="submission" date="2001-12" db="EMBL/GenBank/DDBJ databases">
        <title>Arabidopsis thaliana transcription factor WRKY57.</title>
        <authorList>
            <person name="Ulker B."/>
            <person name="Kushnir S."/>
            <person name="Somssich I.E."/>
        </authorList>
    </citation>
    <scope>NUCLEOTIDE SEQUENCE [MRNA]</scope>
    <source>
        <strain>cv. Columbia</strain>
        <tissue>Flower</tissue>
    </source>
</reference>
<reference key="2">
    <citation type="journal article" date="2000" name="Nature">
        <title>Sequence and analysis of chromosome 1 of the plant Arabidopsis thaliana.</title>
        <authorList>
            <person name="Theologis A."/>
            <person name="Ecker J.R."/>
            <person name="Palm C.J."/>
            <person name="Federspiel N.A."/>
            <person name="Kaul S."/>
            <person name="White O."/>
            <person name="Alonso J."/>
            <person name="Altafi H."/>
            <person name="Araujo R."/>
            <person name="Bowman C.L."/>
            <person name="Brooks S.Y."/>
            <person name="Buehler E."/>
            <person name="Chan A."/>
            <person name="Chao Q."/>
            <person name="Chen H."/>
            <person name="Cheuk R.F."/>
            <person name="Chin C.W."/>
            <person name="Chung M.K."/>
            <person name="Conn L."/>
            <person name="Conway A.B."/>
            <person name="Conway A.R."/>
            <person name="Creasy T.H."/>
            <person name="Dewar K."/>
            <person name="Dunn P."/>
            <person name="Etgu P."/>
            <person name="Feldblyum T.V."/>
            <person name="Feng J.-D."/>
            <person name="Fong B."/>
            <person name="Fujii C.Y."/>
            <person name="Gill J.E."/>
            <person name="Goldsmith A.D."/>
            <person name="Haas B."/>
            <person name="Hansen N.F."/>
            <person name="Hughes B."/>
            <person name="Huizar L."/>
            <person name="Hunter J.L."/>
            <person name="Jenkins J."/>
            <person name="Johnson-Hopson C."/>
            <person name="Khan S."/>
            <person name="Khaykin E."/>
            <person name="Kim C.J."/>
            <person name="Koo H.L."/>
            <person name="Kremenetskaia I."/>
            <person name="Kurtz D.B."/>
            <person name="Kwan A."/>
            <person name="Lam B."/>
            <person name="Langin-Hooper S."/>
            <person name="Lee A."/>
            <person name="Lee J.M."/>
            <person name="Lenz C.A."/>
            <person name="Li J.H."/>
            <person name="Li Y.-P."/>
            <person name="Lin X."/>
            <person name="Liu S.X."/>
            <person name="Liu Z.A."/>
            <person name="Luros J.S."/>
            <person name="Maiti R."/>
            <person name="Marziali A."/>
            <person name="Militscher J."/>
            <person name="Miranda M."/>
            <person name="Nguyen M."/>
            <person name="Nierman W.C."/>
            <person name="Osborne B.I."/>
            <person name="Pai G."/>
            <person name="Peterson J."/>
            <person name="Pham P.K."/>
            <person name="Rizzo M."/>
            <person name="Rooney T."/>
            <person name="Rowley D."/>
            <person name="Sakano H."/>
            <person name="Salzberg S.L."/>
            <person name="Schwartz J.R."/>
            <person name="Shinn P."/>
            <person name="Southwick A.M."/>
            <person name="Sun H."/>
            <person name="Tallon L.J."/>
            <person name="Tambunga G."/>
            <person name="Toriumi M.J."/>
            <person name="Town C.D."/>
            <person name="Utterback T."/>
            <person name="Van Aken S."/>
            <person name="Vaysberg M."/>
            <person name="Vysotskaia V.S."/>
            <person name="Walker M."/>
            <person name="Wu D."/>
            <person name="Yu G."/>
            <person name="Fraser C.M."/>
            <person name="Venter J.C."/>
            <person name="Davis R.W."/>
        </authorList>
    </citation>
    <scope>NUCLEOTIDE SEQUENCE [LARGE SCALE GENOMIC DNA]</scope>
    <source>
        <strain>cv. Columbia</strain>
    </source>
</reference>
<reference key="3">
    <citation type="journal article" date="2017" name="Plant J.">
        <title>Araport11: a complete reannotation of the Arabidopsis thaliana reference genome.</title>
        <authorList>
            <person name="Cheng C.Y."/>
            <person name="Krishnakumar V."/>
            <person name="Chan A.P."/>
            <person name="Thibaud-Nissen F."/>
            <person name="Schobel S."/>
            <person name="Town C.D."/>
        </authorList>
    </citation>
    <scope>GENOME REANNOTATION</scope>
    <source>
        <strain>cv. Columbia</strain>
    </source>
</reference>
<evidence type="ECO:0000250" key="1"/>
<evidence type="ECO:0000255" key="2">
    <source>
        <dbReference type="PROSITE-ProRule" id="PRU00223"/>
    </source>
</evidence>
<evidence type="ECO:0000256" key="3">
    <source>
        <dbReference type="SAM" id="MobiDB-lite"/>
    </source>
</evidence>
<evidence type="ECO:0000305" key="4"/>
<keyword id="KW-0238">DNA-binding</keyword>
<keyword id="KW-0539">Nucleus</keyword>
<keyword id="KW-1185">Reference proteome</keyword>
<keyword id="KW-0804">Transcription</keyword>
<keyword id="KW-0805">Transcription regulation</keyword>
<comment type="function">
    <text evidence="1">Transcription factor. Interacts specifically with the W box (5'-(T)TGAC[CT]-3'), a frequently occurring elicitor-responsive cis-acting element (By similarity).</text>
</comment>
<comment type="subcellular location">
    <subcellularLocation>
        <location evidence="4">Nucleus</location>
    </subcellularLocation>
</comment>
<comment type="similarity">
    <text evidence="4">Belongs to the WRKY group II-c family.</text>
</comment>
<feature type="chain" id="PRO_0000133698" description="Probable WRKY transcription factor 57">
    <location>
        <begin position="1"/>
        <end position="287"/>
    </location>
</feature>
<feature type="DNA-binding region" description="WRKY" evidence="2">
    <location>
        <begin position="141"/>
        <end position="206"/>
    </location>
</feature>
<feature type="region of interest" description="Disordered" evidence="3">
    <location>
        <begin position="86"/>
        <end position="137"/>
    </location>
</feature>
<feature type="region of interest" description="Disordered" evidence="3">
    <location>
        <begin position="248"/>
        <end position="287"/>
    </location>
</feature>
<feature type="compositionally biased region" description="Low complexity" evidence="3">
    <location>
        <begin position="86"/>
        <end position="99"/>
    </location>
</feature>
<feature type="compositionally biased region" description="Basic residues" evidence="3">
    <location>
        <begin position="122"/>
        <end position="132"/>
    </location>
</feature>
<feature type="compositionally biased region" description="Polar residues" evidence="3">
    <location>
        <begin position="262"/>
        <end position="271"/>
    </location>
</feature>
<dbReference type="EMBL" id="AY071849">
    <property type="protein sequence ID" value="AAL61859.1"/>
    <property type="molecule type" value="mRNA"/>
</dbReference>
<dbReference type="EMBL" id="AC018364">
    <property type="protein sequence ID" value="AAG52498.1"/>
    <property type="molecule type" value="Genomic_DNA"/>
</dbReference>
<dbReference type="EMBL" id="AC073178">
    <property type="protein sequence ID" value="AAG60090.1"/>
    <property type="molecule type" value="Genomic_DNA"/>
</dbReference>
<dbReference type="EMBL" id="CP002684">
    <property type="protein sequence ID" value="AEE34908.1"/>
    <property type="molecule type" value="Genomic_DNA"/>
</dbReference>
<dbReference type="EMBL" id="CP002684">
    <property type="protein sequence ID" value="AEE34909.1"/>
    <property type="molecule type" value="Genomic_DNA"/>
</dbReference>
<dbReference type="EMBL" id="CP002684">
    <property type="protein sequence ID" value="ANM59178.1"/>
    <property type="molecule type" value="Genomic_DNA"/>
</dbReference>
<dbReference type="PIR" id="B96717">
    <property type="entry name" value="B96717"/>
</dbReference>
<dbReference type="RefSeq" id="NP_001321561.1">
    <property type="nucleotide sequence ID" value="NM_001334407.1"/>
</dbReference>
<dbReference type="RefSeq" id="NP_177090.1">
    <property type="nucleotide sequence ID" value="NM_105598.3"/>
</dbReference>
<dbReference type="RefSeq" id="NP_974112.1">
    <property type="nucleotide sequence ID" value="NM_202383.3"/>
</dbReference>
<dbReference type="SMR" id="Q9C983"/>
<dbReference type="BioGRID" id="28483">
    <property type="interactions" value="3"/>
</dbReference>
<dbReference type="FunCoup" id="Q9C983">
    <property type="interactions" value="62"/>
</dbReference>
<dbReference type="STRING" id="3702.Q9C983"/>
<dbReference type="GlyGen" id="Q9C983">
    <property type="glycosylation" value="1 site"/>
</dbReference>
<dbReference type="iPTMnet" id="Q9C983"/>
<dbReference type="PaxDb" id="3702-AT1G69310.1"/>
<dbReference type="ProteomicsDB" id="234389"/>
<dbReference type="EnsemblPlants" id="AT1G69310.1">
    <property type="protein sequence ID" value="AT1G69310.1"/>
    <property type="gene ID" value="AT1G69310"/>
</dbReference>
<dbReference type="EnsemblPlants" id="AT1G69310.2">
    <property type="protein sequence ID" value="AT1G69310.2"/>
    <property type="gene ID" value="AT1G69310"/>
</dbReference>
<dbReference type="EnsemblPlants" id="AT1G69310.4">
    <property type="protein sequence ID" value="AT1G69310.4"/>
    <property type="gene ID" value="AT1G69310"/>
</dbReference>
<dbReference type="GeneID" id="843262"/>
<dbReference type="Gramene" id="AT1G69310.1">
    <property type="protein sequence ID" value="AT1G69310.1"/>
    <property type="gene ID" value="AT1G69310"/>
</dbReference>
<dbReference type="Gramene" id="AT1G69310.2">
    <property type="protein sequence ID" value="AT1G69310.2"/>
    <property type="gene ID" value="AT1G69310"/>
</dbReference>
<dbReference type="Gramene" id="AT1G69310.4">
    <property type="protein sequence ID" value="AT1G69310.4"/>
    <property type="gene ID" value="AT1G69310"/>
</dbReference>
<dbReference type="KEGG" id="ath:AT1G69310"/>
<dbReference type="Araport" id="AT1G69310"/>
<dbReference type="TAIR" id="AT1G69310">
    <property type="gene designation" value="WRKY57"/>
</dbReference>
<dbReference type="eggNOG" id="ENOG502QSI6">
    <property type="taxonomic scope" value="Eukaryota"/>
</dbReference>
<dbReference type="HOGENOM" id="CLU_033779_0_1_1"/>
<dbReference type="InParanoid" id="Q9C983"/>
<dbReference type="OMA" id="SDNVYFF"/>
<dbReference type="PhylomeDB" id="Q9C983"/>
<dbReference type="PRO" id="PR:Q9C983"/>
<dbReference type="Proteomes" id="UP000006548">
    <property type="component" value="Chromosome 1"/>
</dbReference>
<dbReference type="ExpressionAtlas" id="Q9C983">
    <property type="expression patterns" value="baseline and differential"/>
</dbReference>
<dbReference type="GO" id="GO:0005634">
    <property type="term" value="C:nucleus"/>
    <property type="evidence" value="ECO:0007669"/>
    <property type="project" value="UniProtKB-SubCell"/>
</dbReference>
<dbReference type="GO" id="GO:0003700">
    <property type="term" value="F:DNA-binding transcription factor activity"/>
    <property type="evidence" value="ECO:0000314"/>
    <property type="project" value="TAIR"/>
</dbReference>
<dbReference type="GO" id="GO:0000976">
    <property type="term" value="F:transcription cis-regulatory region binding"/>
    <property type="evidence" value="ECO:0000353"/>
    <property type="project" value="TAIR"/>
</dbReference>
<dbReference type="GO" id="GO:0006970">
    <property type="term" value="P:response to osmotic stress"/>
    <property type="evidence" value="ECO:0000315"/>
    <property type="project" value="TAIR"/>
</dbReference>
<dbReference type="GO" id="GO:0009651">
    <property type="term" value="P:response to salt stress"/>
    <property type="evidence" value="ECO:0000315"/>
    <property type="project" value="TAIR"/>
</dbReference>
<dbReference type="GO" id="GO:0009414">
    <property type="term" value="P:response to water deprivation"/>
    <property type="evidence" value="ECO:0000315"/>
    <property type="project" value="TAIR"/>
</dbReference>
<dbReference type="FunFam" id="2.20.25.80:FF:000003">
    <property type="entry name" value="WRKY transcription factor 57"/>
    <property type="match status" value="1"/>
</dbReference>
<dbReference type="Gene3D" id="2.20.25.80">
    <property type="entry name" value="WRKY domain"/>
    <property type="match status" value="1"/>
</dbReference>
<dbReference type="InterPro" id="IPR003657">
    <property type="entry name" value="WRKY_dom"/>
</dbReference>
<dbReference type="InterPro" id="IPR036576">
    <property type="entry name" value="WRKY_dom_sf"/>
</dbReference>
<dbReference type="InterPro" id="IPR044810">
    <property type="entry name" value="WRKY_plant"/>
</dbReference>
<dbReference type="PANTHER" id="PTHR31221:SF334">
    <property type="entry name" value="WRKY TRANSCRIPTION FACTOR 57-RELATED"/>
    <property type="match status" value="1"/>
</dbReference>
<dbReference type="PANTHER" id="PTHR31221">
    <property type="entry name" value="WRKY TRANSCRIPTION FACTOR PROTEIN 1-RELATED"/>
    <property type="match status" value="1"/>
</dbReference>
<dbReference type="Pfam" id="PF03106">
    <property type="entry name" value="WRKY"/>
    <property type="match status" value="1"/>
</dbReference>
<dbReference type="SMART" id="SM00774">
    <property type="entry name" value="WRKY"/>
    <property type="match status" value="1"/>
</dbReference>
<dbReference type="SUPFAM" id="SSF118290">
    <property type="entry name" value="WRKY DNA-binding domain"/>
    <property type="match status" value="1"/>
</dbReference>
<dbReference type="PROSITE" id="PS50811">
    <property type="entry name" value="WRKY"/>
    <property type="match status" value="1"/>
</dbReference>
<sequence length="287" mass="32042">MNDPDNPDLSNDDSAWRELTLTAQDSDFFDRDTSNILSDFGWNLHHSSDHPHSLRFDSDLTQTTGVKPTTVTSSCSSSAAVSVAVTSTNNNPSATSSSSEDPAENSTASAEKTPPPETPVKEKKKAQKRIRQPRFAFMTKSDVDNLEDGYRWRKYGQKAVKNSPFPRSYYRCTNSRCTVKKRVERSSDDPSIVITTYEGQHCHQTIGFPRGGILTAHDPHSFTSHHHLPPPLPNPYYYQELLHQLHRDNNAPSPRLPRPTTEDTPAVSTPSEEGLLGDIVPQTMRNP</sequence>
<accession>Q9C983</accession>
<accession>Q9C798</accession>
<proteinExistence type="evidence at transcript level"/>
<gene>
    <name type="primary">WRKY57</name>
    <name type="ordered locus">At1g69310</name>
    <name type="ORF">F10D13.1</name>
    <name type="ORF">F23O10.11</name>
</gene>
<protein>
    <recommendedName>
        <fullName>Probable WRKY transcription factor 57</fullName>
    </recommendedName>
    <alternativeName>
        <fullName>WRKY DNA-binding protein 57</fullName>
    </alternativeName>
</protein>